<protein>
    <recommendedName>
        <fullName evidence="1">Putrescine carbamoyltransferase</fullName>
        <shortName evidence="1">PTC</shortName>
        <shortName evidence="1">PTCase</shortName>
        <ecNumber evidence="1">2.1.3.6</ecNumber>
    </recommendedName>
    <alternativeName>
        <fullName evidence="1">Putrescine transcarbamoylase</fullName>
    </alternativeName>
    <alternativeName>
        <fullName evidence="1">Putrescine transcarbamylase</fullName>
    </alternativeName>
</protein>
<evidence type="ECO:0000255" key="1">
    <source>
        <dbReference type="HAMAP-Rule" id="MF_02102"/>
    </source>
</evidence>
<reference key="1">
    <citation type="journal article" date="2006" name="Proc. Natl. Acad. Sci. U.S.A.">
        <title>Comparative genomics of the lactic acid bacteria.</title>
        <authorList>
            <person name="Makarova K.S."/>
            <person name="Slesarev A."/>
            <person name="Wolf Y.I."/>
            <person name="Sorokin A."/>
            <person name="Mirkin B."/>
            <person name="Koonin E.V."/>
            <person name="Pavlov A."/>
            <person name="Pavlova N."/>
            <person name="Karamychev V."/>
            <person name="Polouchine N."/>
            <person name="Shakhova V."/>
            <person name="Grigoriev I."/>
            <person name="Lou Y."/>
            <person name="Rohksar D."/>
            <person name="Lucas S."/>
            <person name="Huang K."/>
            <person name="Goodstein D.M."/>
            <person name="Hawkins T."/>
            <person name="Plengvidhya V."/>
            <person name="Welker D."/>
            <person name="Hughes J."/>
            <person name="Goh Y."/>
            <person name="Benson A."/>
            <person name="Baldwin K."/>
            <person name="Lee J.-H."/>
            <person name="Diaz-Muniz I."/>
            <person name="Dosti B."/>
            <person name="Smeianov V."/>
            <person name="Wechter W."/>
            <person name="Barabote R."/>
            <person name="Lorca G."/>
            <person name="Altermann E."/>
            <person name="Barrangou R."/>
            <person name="Ganesan B."/>
            <person name="Xie Y."/>
            <person name="Rawsthorne H."/>
            <person name="Tamir D."/>
            <person name="Parker C."/>
            <person name="Breidt F."/>
            <person name="Broadbent J.R."/>
            <person name="Hutkins R."/>
            <person name="O'Sullivan D."/>
            <person name="Steele J."/>
            <person name="Unlu G."/>
            <person name="Saier M.H. Jr."/>
            <person name="Klaenhammer T."/>
            <person name="Richardson P."/>
            <person name="Kozyavkin S."/>
            <person name="Weimer B.C."/>
            <person name="Mills D.A."/>
        </authorList>
    </citation>
    <scope>NUCLEOTIDE SEQUENCE [LARGE SCALE GENOMIC DNA]</scope>
    <source>
        <strain>ATCC 25745 / CCUG 21536 / LMG 10740 / 183-1w</strain>
    </source>
</reference>
<reference key="2">
    <citation type="journal article" date="2004" name="BMC Genomics">
        <title>Retrieving sequences of enzymes experimentally characterized but erroneously annotated: the case of the putrescine carbamoyltransferase.</title>
        <authorList>
            <person name="Naumoff D.G."/>
            <person name="Xu Y."/>
            <person name="Glansdorff N."/>
            <person name="Labedan B."/>
        </authorList>
    </citation>
    <scope>REANNOTATION AS A PTCASE</scope>
</reference>
<feature type="chain" id="PRO_0000380723" description="Putrescine carbamoyltransferase">
    <location>
        <begin position="1"/>
        <end position="344"/>
    </location>
</feature>
<feature type="binding site" evidence="1">
    <location>
        <begin position="54"/>
        <end position="58"/>
    </location>
    <ligand>
        <name>carbamoyl phosphate</name>
        <dbReference type="ChEBI" id="CHEBI:58228"/>
    </ligand>
</feature>
<feature type="binding site" evidence="1">
    <location>
        <position position="105"/>
    </location>
    <ligand>
        <name>carbamoyl phosphate</name>
        <dbReference type="ChEBI" id="CHEBI:58228"/>
    </ligand>
</feature>
<feature type="binding site" evidence="1">
    <location>
        <position position="132"/>
    </location>
    <ligand>
        <name>carbamoyl phosphate</name>
        <dbReference type="ChEBI" id="CHEBI:58228"/>
    </ligand>
</feature>
<feature type="binding site" evidence="1">
    <location>
        <begin position="271"/>
        <end position="274"/>
    </location>
    <ligand>
        <name>putrescine</name>
        <dbReference type="ChEBI" id="CHEBI:326268"/>
    </ligand>
</feature>
<feature type="site" description="Important for structural integrity" evidence="1">
    <location>
        <position position="29"/>
    </location>
</feature>
<feature type="site" description="Important for structural integrity" evidence="1">
    <location>
        <position position="145"/>
    </location>
</feature>
<gene>
    <name evidence="1" type="primary">ptcA</name>
    <name type="ordered locus">PEPE_0189</name>
</gene>
<proteinExistence type="inferred from homology"/>
<keyword id="KW-0963">Cytoplasm</keyword>
<keyword id="KW-0620">Polyamine biosynthesis</keyword>
<keyword id="KW-0808">Transferase</keyword>
<dbReference type="EC" id="2.1.3.6" evidence="1"/>
<dbReference type="EMBL" id="CP000422">
    <property type="protein sequence ID" value="ABJ67293.1"/>
    <property type="molecule type" value="Genomic_DNA"/>
</dbReference>
<dbReference type="RefSeq" id="WP_011672910.1">
    <property type="nucleotide sequence ID" value="NC_008525.1"/>
</dbReference>
<dbReference type="SMR" id="Q03HM9"/>
<dbReference type="STRING" id="278197.PEPE_0189"/>
<dbReference type="GeneID" id="33062946"/>
<dbReference type="KEGG" id="ppe:PEPE_0189"/>
<dbReference type="eggNOG" id="COG0078">
    <property type="taxonomic scope" value="Bacteria"/>
</dbReference>
<dbReference type="HOGENOM" id="CLU_043846_3_1_9"/>
<dbReference type="OrthoDB" id="9802587at2"/>
<dbReference type="UniPathway" id="UPA00534">
    <property type="reaction ID" value="UER00941"/>
</dbReference>
<dbReference type="Proteomes" id="UP000000773">
    <property type="component" value="Chromosome"/>
</dbReference>
<dbReference type="GO" id="GO:0005737">
    <property type="term" value="C:cytoplasm"/>
    <property type="evidence" value="ECO:0007669"/>
    <property type="project" value="UniProtKB-SubCell"/>
</dbReference>
<dbReference type="GO" id="GO:0016597">
    <property type="term" value="F:amino acid binding"/>
    <property type="evidence" value="ECO:0007669"/>
    <property type="project" value="InterPro"/>
</dbReference>
<dbReference type="GO" id="GO:0004585">
    <property type="term" value="F:ornithine carbamoyltransferase activity"/>
    <property type="evidence" value="ECO:0007669"/>
    <property type="project" value="UniProtKB-ARBA"/>
</dbReference>
<dbReference type="GO" id="GO:0050231">
    <property type="term" value="F:putrescine carbamoyltransferase activity"/>
    <property type="evidence" value="ECO:0007669"/>
    <property type="project" value="UniProtKB-UniRule"/>
</dbReference>
<dbReference type="GO" id="GO:0042450">
    <property type="term" value="P:arginine biosynthetic process via ornithine"/>
    <property type="evidence" value="ECO:0007669"/>
    <property type="project" value="TreeGrafter"/>
</dbReference>
<dbReference type="GO" id="GO:0019240">
    <property type="term" value="P:citrulline biosynthetic process"/>
    <property type="evidence" value="ECO:0007669"/>
    <property type="project" value="TreeGrafter"/>
</dbReference>
<dbReference type="GO" id="GO:0033390">
    <property type="term" value="P:putrescine biosynthetic process from arginine via N-carbamoylputrescine"/>
    <property type="evidence" value="ECO:0007669"/>
    <property type="project" value="UniProtKB-UniRule"/>
</dbReference>
<dbReference type="FunFam" id="3.40.50.1370:FF:000008">
    <property type="entry name" value="Ornithine carbamoyltransferase"/>
    <property type="match status" value="1"/>
</dbReference>
<dbReference type="Gene3D" id="3.40.50.1370">
    <property type="entry name" value="Aspartate/ornithine carbamoyltransferase"/>
    <property type="match status" value="2"/>
</dbReference>
<dbReference type="HAMAP" id="MF_02102">
    <property type="entry name" value="PTCase"/>
    <property type="match status" value="1"/>
</dbReference>
<dbReference type="InterPro" id="IPR006132">
    <property type="entry name" value="Asp/Orn_carbamoyltranf_P-bd"/>
</dbReference>
<dbReference type="InterPro" id="IPR006130">
    <property type="entry name" value="Asp/Orn_carbamoylTrfase"/>
</dbReference>
<dbReference type="InterPro" id="IPR036901">
    <property type="entry name" value="Asp/Orn_carbamoylTrfase_sf"/>
</dbReference>
<dbReference type="InterPro" id="IPR006131">
    <property type="entry name" value="Asp_carbamoyltransf_Asp/Orn-bd"/>
</dbReference>
<dbReference type="InterPro" id="IPR002292">
    <property type="entry name" value="Orn/put_carbamltrans"/>
</dbReference>
<dbReference type="InterPro" id="IPR024903">
    <property type="entry name" value="PtcA"/>
</dbReference>
<dbReference type="NCBIfam" id="TIGR00658">
    <property type="entry name" value="orni_carb_tr"/>
    <property type="match status" value="1"/>
</dbReference>
<dbReference type="NCBIfam" id="NF001986">
    <property type="entry name" value="PRK00779.1"/>
    <property type="match status" value="1"/>
</dbReference>
<dbReference type="NCBIfam" id="TIGR04384">
    <property type="entry name" value="putr_carbamoyl"/>
    <property type="match status" value="1"/>
</dbReference>
<dbReference type="PANTHER" id="PTHR45753">
    <property type="entry name" value="ORNITHINE CARBAMOYLTRANSFERASE, MITOCHONDRIAL"/>
    <property type="match status" value="1"/>
</dbReference>
<dbReference type="PANTHER" id="PTHR45753:SF3">
    <property type="entry name" value="ORNITHINE TRANSCARBAMYLASE, MITOCHONDRIAL"/>
    <property type="match status" value="1"/>
</dbReference>
<dbReference type="Pfam" id="PF00185">
    <property type="entry name" value="OTCace"/>
    <property type="match status" value="1"/>
</dbReference>
<dbReference type="Pfam" id="PF02729">
    <property type="entry name" value="OTCace_N"/>
    <property type="match status" value="1"/>
</dbReference>
<dbReference type="PRINTS" id="PR00100">
    <property type="entry name" value="AOTCASE"/>
</dbReference>
<dbReference type="PRINTS" id="PR00102">
    <property type="entry name" value="OTCASE"/>
</dbReference>
<dbReference type="SUPFAM" id="SSF53671">
    <property type="entry name" value="Aspartate/ornithine carbamoyltransferase"/>
    <property type="match status" value="1"/>
</dbReference>
<sequence>MNTKRDFIDTNTYTQEEITYMINLGLKIKESIKNGYYPPLLKNKTLGMIFEQSSTRTRTSAEAAMTELGGHAQYLAPGQIQLGGHETIEDTSQVLGRILDIIGARVDRHKTVAEVGKYAKVPVVNFMSDYNHPTQELGDITTMVEHLPAGKKLSDCKIVFVGDATQVCVSTMFMTTKMGMDFVQFGPKGFQMKDDVVEIGKENAKKYGGSVTITEDADEAMKDADFVYTDVWYGLYDDEMPKEERMNIFYPKYQVNAELMAKASDHVKFMHCLPATRGEEVTDEVLDSDYSIVWDEAENRKTAMRAIFVYLLNPSLNYASKAVAEKYDAEFELMLKNAVDSRNN</sequence>
<name>PTC_PEDPA</name>
<accession>Q03HM9</accession>
<organism>
    <name type="scientific">Pediococcus pentosaceus (strain ATCC 25745 / CCUG 21536 / LMG 10740 / 183-1w)</name>
    <dbReference type="NCBI Taxonomy" id="278197"/>
    <lineage>
        <taxon>Bacteria</taxon>
        <taxon>Bacillati</taxon>
        <taxon>Bacillota</taxon>
        <taxon>Bacilli</taxon>
        <taxon>Lactobacillales</taxon>
        <taxon>Lactobacillaceae</taxon>
        <taxon>Pediococcus</taxon>
    </lineage>
</organism>
<comment type="function">
    <text evidence="1">Catalyzes the phosphorolysis of N-carbamoylputrescine to form carbamoyl phosphate and putrescine. Is involved in the degradation pathway of the polyamine agmatine.</text>
</comment>
<comment type="catalytic activity">
    <reaction evidence="1">
        <text>carbamoyl phosphate + putrescine = N-carbamoylputrescine + phosphate + H(+)</text>
        <dbReference type="Rhea" id="RHEA:21936"/>
        <dbReference type="ChEBI" id="CHEBI:15378"/>
        <dbReference type="ChEBI" id="CHEBI:43474"/>
        <dbReference type="ChEBI" id="CHEBI:58228"/>
        <dbReference type="ChEBI" id="CHEBI:58318"/>
        <dbReference type="ChEBI" id="CHEBI:326268"/>
        <dbReference type="EC" id="2.1.3.6"/>
    </reaction>
</comment>
<comment type="pathway">
    <text evidence="1">Amine and polyamine biosynthesis; putrescine biosynthesis via agmatine pathway; putrescine from N-carbamoylputrescine (transferase route): step 1/1.</text>
</comment>
<comment type="subunit">
    <text evidence="1">Homotrimer.</text>
</comment>
<comment type="subcellular location">
    <subcellularLocation>
        <location evidence="1">Cytoplasm</location>
    </subcellularLocation>
</comment>
<comment type="similarity">
    <text evidence="1">Belongs to the aspartate/ornithine carbamoyltransferase superfamily. PTCase family.</text>
</comment>